<proteinExistence type="inferred from homology"/>
<evidence type="ECO:0000255" key="1">
    <source>
        <dbReference type="HAMAP-Rule" id="MF_00451"/>
    </source>
</evidence>
<accession>Q3ID15</accession>
<keyword id="KW-0067">ATP-binding</keyword>
<keyword id="KW-0963">Cytoplasm</keyword>
<keyword id="KW-0418">Kinase</keyword>
<keyword id="KW-0460">Magnesium</keyword>
<keyword id="KW-0479">Metal-binding</keyword>
<keyword id="KW-0546">Nucleotide metabolism</keyword>
<keyword id="KW-0547">Nucleotide-binding</keyword>
<keyword id="KW-0597">Phosphoprotein</keyword>
<keyword id="KW-1185">Reference proteome</keyword>
<keyword id="KW-0808">Transferase</keyword>
<gene>
    <name evidence="1" type="primary">ndk</name>
    <name type="ordered locus">PSHAb0142</name>
</gene>
<protein>
    <recommendedName>
        <fullName evidence="1">Nucleoside diphosphate kinase</fullName>
        <shortName evidence="1">NDK</shortName>
        <shortName evidence="1">NDP kinase</shortName>
        <ecNumber evidence="1">2.7.4.6</ecNumber>
    </recommendedName>
    <alternativeName>
        <fullName evidence="1">Nucleoside-2-P kinase</fullName>
    </alternativeName>
</protein>
<comment type="function">
    <text evidence="1">Major role in the synthesis of nucleoside triphosphates other than ATP. The ATP gamma phosphate is transferred to the NDP beta phosphate via a ping-pong mechanism, using a phosphorylated active-site intermediate.</text>
</comment>
<comment type="catalytic activity">
    <reaction evidence="1">
        <text>a 2'-deoxyribonucleoside 5'-diphosphate + ATP = a 2'-deoxyribonucleoside 5'-triphosphate + ADP</text>
        <dbReference type="Rhea" id="RHEA:44640"/>
        <dbReference type="ChEBI" id="CHEBI:30616"/>
        <dbReference type="ChEBI" id="CHEBI:61560"/>
        <dbReference type="ChEBI" id="CHEBI:73316"/>
        <dbReference type="ChEBI" id="CHEBI:456216"/>
        <dbReference type="EC" id="2.7.4.6"/>
    </reaction>
</comment>
<comment type="catalytic activity">
    <reaction evidence="1">
        <text>a ribonucleoside 5'-diphosphate + ATP = a ribonucleoside 5'-triphosphate + ADP</text>
        <dbReference type="Rhea" id="RHEA:18113"/>
        <dbReference type="ChEBI" id="CHEBI:30616"/>
        <dbReference type="ChEBI" id="CHEBI:57930"/>
        <dbReference type="ChEBI" id="CHEBI:61557"/>
        <dbReference type="ChEBI" id="CHEBI:456216"/>
        <dbReference type="EC" id="2.7.4.6"/>
    </reaction>
</comment>
<comment type="cofactor">
    <cofactor evidence="1">
        <name>Mg(2+)</name>
        <dbReference type="ChEBI" id="CHEBI:18420"/>
    </cofactor>
</comment>
<comment type="subunit">
    <text evidence="1">Homotetramer.</text>
</comment>
<comment type="subcellular location">
    <subcellularLocation>
        <location evidence="1">Cytoplasm</location>
    </subcellularLocation>
</comment>
<comment type="similarity">
    <text evidence="1">Belongs to the NDK family.</text>
</comment>
<sequence length="143" mass="15530">MALERTFSIVKPDAVAKNHIGAIYNRFETAGLKIVAAKMVHLSQEKAEGFYAEHSERPFFGALVSFMTSGPVMVTVLEGENAVLKNREIMGATNPADALAGTLRADYADSIDENAVHGSDAVESAAREIAYFFADEELCSRTR</sequence>
<organism>
    <name type="scientific">Pseudoalteromonas translucida (strain TAC 125)</name>
    <dbReference type="NCBI Taxonomy" id="326442"/>
    <lineage>
        <taxon>Bacteria</taxon>
        <taxon>Pseudomonadati</taxon>
        <taxon>Pseudomonadota</taxon>
        <taxon>Gammaproteobacteria</taxon>
        <taxon>Alteromonadales</taxon>
        <taxon>Pseudoalteromonadaceae</taxon>
        <taxon>Pseudoalteromonas</taxon>
    </lineage>
</organism>
<feature type="chain" id="PRO_0000226569" description="Nucleoside diphosphate kinase">
    <location>
        <begin position="1"/>
        <end position="143"/>
    </location>
</feature>
<feature type="active site" description="Pros-phosphohistidine intermediate" evidence="1">
    <location>
        <position position="117"/>
    </location>
</feature>
<feature type="binding site" evidence="1">
    <location>
        <position position="11"/>
    </location>
    <ligand>
        <name>ATP</name>
        <dbReference type="ChEBI" id="CHEBI:30616"/>
    </ligand>
</feature>
<feature type="binding site" evidence="1">
    <location>
        <position position="59"/>
    </location>
    <ligand>
        <name>ATP</name>
        <dbReference type="ChEBI" id="CHEBI:30616"/>
    </ligand>
</feature>
<feature type="binding site" evidence="1">
    <location>
        <position position="87"/>
    </location>
    <ligand>
        <name>ATP</name>
        <dbReference type="ChEBI" id="CHEBI:30616"/>
    </ligand>
</feature>
<feature type="binding site" evidence="1">
    <location>
        <position position="93"/>
    </location>
    <ligand>
        <name>ATP</name>
        <dbReference type="ChEBI" id="CHEBI:30616"/>
    </ligand>
</feature>
<feature type="binding site" evidence="1">
    <location>
        <position position="104"/>
    </location>
    <ligand>
        <name>ATP</name>
        <dbReference type="ChEBI" id="CHEBI:30616"/>
    </ligand>
</feature>
<feature type="binding site" evidence="1">
    <location>
        <position position="114"/>
    </location>
    <ligand>
        <name>ATP</name>
        <dbReference type="ChEBI" id="CHEBI:30616"/>
    </ligand>
</feature>
<dbReference type="EC" id="2.7.4.6" evidence="1"/>
<dbReference type="EMBL" id="CR954247">
    <property type="protein sequence ID" value="CAI89189.1"/>
    <property type="molecule type" value="Genomic_DNA"/>
</dbReference>
<dbReference type="SMR" id="Q3ID15"/>
<dbReference type="STRING" id="326442.PSHAb0142"/>
<dbReference type="KEGG" id="pha:PSHAb0142"/>
<dbReference type="eggNOG" id="COG0105">
    <property type="taxonomic scope" value="Bacteria"/>
</dbReference>
<dbReference type="HOGENOM" id="CLU_060216_8_1_6"/>
<dbReference type="BioCyc" id="PHAL326442:PSHA_RS15550-MONOMER"/>
<dbReference type="Proteomes" id="UP000006843">
    <property type="component" value="Chromosome II"/>
</dbReference>
<dbReference type="GO" id="GO:0005737">
    <property type="term" value="C:cytoplasm"/>
    <property type="evidence" value="ECO:0007669"/>
    <property type="project" value="UniProtKB-SubCell"/>
</dbReference>
<dbReference type="GO" id="GO:0005524">
    <property type="term" value="F:ATP binding"/>
    <property type="evidence" value="ECO:0007669"/>
    <property type="project" value="UniProtKB-UniRule"/>
</dbReference>
<dbReference type="GO" id="GO:0046872">
    <property type="term" value="F:metal ion binding"/>
    <property type="evidence" value="ECO:0007669"/>
    <property type="project" value="UniProtKB-KW"/>
</dbReference>
<dbReference type="GO" id="GO:0004550">
    <property type="term" value="F:nucleoside diphosphate kinase activity"/>
    <property type="evidence" value="ECO:0007669"/>
    <property type="project" value="UniProtKB-UniRule"/>
</dbReference>
<dbReference type="GO" id="GO:0006241">
    <property type="term" value="P:CTP biosynthetic process"/>
    <property type="evidence" value="ECO:0007669"/>
    <property type="project" value="UniProtKB-UniRule"/>
</dbReference>
<dbReference type="GO" id="GO:0006183">
    <property type="term" value="P:GTP biosynthetic process"/>
    <property type="evidence" value="ECO:0007669"/>
    <property type="project" value="UniProtKB-UniRule"/>
</dbReference>
<dbReference type="GO" id="GO:0006228">
    <property type="term" value="P:UTP biosynthetic process"/>
    <property type="evidence" value="ECO:0007669"/>
    <property type="project" value="UniProtKB-UniRule"/>
</dbReference>
<dbReference type="CDD" id="cd04413">
    <property type="entry name" value="NDPk_I"/>
    <property type="match status" value="1"/>
</dbReference>
<dbReference type="FunFam" id="3.30.70.141:FF:000001">
    <property type="entry name" value="Nucleoside diphosphate kinase"/>
    <property type="match status" value="1"/>
</dbReference>
<dbReference type="Gene3D" id="3.30.70.141">
    <property type="entry name" value="Nucleoside diphosphate kinase-like domain"/>
    <property type="match status" value="1"/>
</dbReference>
<dbReference type="HAMAP" id="MF_00451">
    <property type="entry name" value="NDP_kinase"/>
    <property type="match status" value="1"/>
</dbReference>
<dbReference type="InterPro" id="IPR034907">
    <property type="entry name" value="NDK-like_dom"/>
</dbReference>
<dbReference type="InterPro" id="IPR036850">
    <property type="entry name" value="NDK-like_dom_sf"/>
</dbReference>
<dbReference type="InterPro" id="IPR001564">
    <property type="entry name" value="Nucleoside_diP_kinase"/>
</dbReference>
<dbReference type="InterPro" id="IPR023005">
    <property type="entry name" value="Nucleoside_diP_kinase_AS"/>
</dbReference>
<dbReference type="NCBIfam" id="NF001908">
    <property type="entry name" value="PRK00668.1"/>
    <property type="match status" value="1"/>
</dbReference>
<dbReference type="PANTHER" id="PTHR11349">
    <property type="entry name" value="NUCLEOSIDE DIPHOSPHATE KINASE"/>
    <property type="match status" value="1"/>
</dbReference>
<dbReference type="Pfam" id="PF00334">
    <property type="entry name" value="NDK"/>
    <property type="match status" value="1"/>
</dbReference>
<dbReference type="PRINTS" id="PR01243">
    <property type="entry name" value="NUCDPKINASE"/>
</dbReference>
<dbReference type="SMART" id="SM00562">
    <property type="entry name" value="NDK"/>
    <property type="match status" value="1"/>
</dbReference>
<dbReference type="SUPFAM" id="SSF54919">
    <property type="entry name" value="Nucleoside diphosphate kinase, NDK"/>
    <property type="match status" value="1"/>
</dbReference>
<dbReference type="PROSITE" id="PS00469">
    <property type="entry name" value="NDPK"/>
    <property type="match status" value="1"/>
</dbReference>
<dbReference type="PROSITE" id="PS51374">
    <property type="entry name" value="NDPK_LIKE"/>
    <property type="match status" value="1"/>
</dbReference>
<reference key="1">
    <citation type="journal article" date="2005" name="Genome Res.">
        <title>Coping with cold: the genome of the versatile marine Antarctica bacterium Pseudoalteromonas haloplanktis TAC125.</title>
        <authorList>
            <person name="Medigue C."/>
            <person name="Krin E."/>
            <person name="Pascal G."/>
            <person name="Barbe V."/>
            <person name="Bernsel A."/>
            <person name="Bertin P.N."/>
            <person name="Cheung F."/>
            <person name="Cruveiller S."/>
            <person name="D'Amico S."/>
            <person name="Duilio A."/>
            <person name="Fang G."/>
            <person name="Feller G."/>
            <person name="Ho C."/>
            <person name="Mangenot S."/>
            <person name="Marino G."/>
            <person name="Nilsson J."/>
            <person name="Parrilli E."/>
            <person name="Rocha E.P.C."/>
            <person name="Rouy Z."/>
            <person name="Sekowska A."/>
            <person name="Tutino M.L."/>
            <person name="Vallenet D."/>
            <person name="von Heijne G."/>
            <person name="Danchin A."/>
        </authorList>
    </citation>
    <scope>NUCLEOTIDE SEQUENCE [LARGE SCALE GENOMIC DNA]</scope>
    <source>
        <strain>TAC 125</strain>
    </source>
</reference>
<name>NDK_PSET1</name>